<organism>
    <name type="scientific">Paramecium tetraurelia</name>
    <dbReference type="NCBI Taxonomy" id="5888"/>
    <lineage>
        <taxon>Eukaryota</taxon>
        <taxon>Sar</taxon>
        <taxon>Alveolata</taxon>
        <taxon>Ciliophora</taxon>
        <taxon>Intramacronucleata</taxon>
        <taxon>Oligohymenophorea</taxon>
        <taxon>Peniculida</taxon>
        <taxon>Parameciidae</taxon>
        <taxon>Paramecium</taxon>
    </lineage>
</organism>
<accession>P15610</accession>
<geneLocation type="mitochondrion"/>
<feature type="chain" id="PRO_0000196870" description="Uncharacterized mitochondrial protein ORF9">
    <location>
        <begin position="1"/>
        <end position="204"/>
    </location>
</feature>
<feature type="region of interest" description="Disordered" evidence="1">
    <location>
        <begin position="47"/>
        <end position="108"/>
    </location>
</feature>
<feature type="compositionally biased region" description="Acidic residues" evidence="1">
    <location>
        <begin position="49"/>
        <end position="106"/>
    </location>
</feature>
<protein>
    <recommendedName>
        <fullName>Uncharacterized mitochondrial protein ORF9</fullName>
    </recommendedName>
</protein>
<comment type="subcellular location">
    <subcellularLocation>
        <location evidence="2">Mitochondrion</location>
    </subcellularLocation>
</comment>
<evidence type="ECO:0000256" key="1">
    <source>
        <dbReference type="SAM" id="MobiDB-lite"/>
    </source>
</evidence>
<evidence type="ECO:0000305" key="2"/>
<reference key="1">
    <citation type="journal article" date="1990" name="Nucleic Acids Res.">
        <title>Nucleotide sequence of the mitochondrial genome of Paramecium.</title>
        <authorList>
            <person name="Pritchard A.E."/>
            <person name="Seilhamer J.J."/>
            <person name="Mahalingam R."/>
            <person name="Sable C.L."/>
            <person name="Venuti S.E."/>
            <person name="Cummings D.J."/>
        </authorList>
    </citation>
    <scope>NUCLEOTIDE SEQUENCE [GENOMIC DNA]</scope>
    <source>
        <strain>Stock 51</strain>
    </source>
</reference>
<proteinExistence type="predicted"/>
<name>YM09_PARTE</name>
<dbReference type="EMBL" id="X15917">
    <property type="protein sequence ID" value="CAA34050.1"/>
    <property type="molecule type" value="Genomic_DNA"/>
</dbReference>
<dbReference type="PIR" id="S07741">
    <property type="entry name" value="S07741"/>
</dbReference>
<dbReference type="GO" id="GO:0005739">
    <property type="term" value="C:mitochondrion"/>
    <property type="evidence" value="ECO:0007669"/>
    <property type="project" value="UniProtKB-SubCell"/>
</dbReference>
<keyword id="KW-0496">Mitochondrion</keyword>
<sequence>MTGDKLDASEGLEEASLRFIEDGSLAQEEEGEGFDFFFKKSSFLAATDSSDDEGGASSGDEGEASSDDEGDASSDDEEEASSDGEGVVEDEETLDAEGEDSDEEGEGGMQAVDCKKFFKLKRREILFFMRKFYFGRKVTRSHVHLFLKKLKRKSTLEICNCAANRFIDAASLFFYFFNVSYLNFFIRQGYLYQNFNRIVARPPT</sequence>